<dbReference type="EMBL" id="CP000021">
    <property type="protein sequence ID" value="AAW87873.1"/>
    <property type="molecule type" value="Genomic_DNA"/>
</dbReference>
<dbReference type="RefSeq" id="WP_011263624.1">
    <property type="nucleotide sequence ID" value="NC_006841.2"/>
</dbReference>
<dbReference type="RefSeq" id="YP_206761.1">
    <property type="nucleotide sequence ID" value="NC_006841.2"/>
</dbReference>
<dbReference type="SMR" id="Q5DZC3"/>
<dbReference type="EnsemblBacteria" id="AAW87873">
    <property type="protein sequence ID" value="AAW87873"/>
    <property type="gene ID" value="VF_A0803"/>
</dbReference>
<dbReference type="GeneID" id="54166122"/>
<dbReference type="KEGG" id="vfi:VF_A0803"/>
<dbReference type="PATRIC" id="fig|312309.11.peg.3405"/>
<dbReference type="eggNOG" id="COG3633">
    <property type="taxonomic scope" value="Bacteria"/>
</dbReference>
<dbReference type="HOGENOM" id="CLU_044581_0_0_6"/>
<dbReference type="OrthoDB" id="9768885at2"/>
<dbReference type="Proteomes" id="UP000000537">
    <property type="component" value="Chromosome II"/>
</dbReference>
<dbReference type="GO" id="GO:0005886">
    <property type="term" value="C:plasma membrane"/>
    <property type="evidence" value="ECO:0007669"/>
    <property type="project" value="UniProtKB-SubCell"/>
</dbReference>
<dbReference type="GO" id="GO:0005295">
    <property type="term" value="F:neutral L-amino acid:sodium symporter activity"/>
    <property type="evidence" value="ECO:0007669"/>
    <property type="project" value="TreeGrafter"/>
</dbReference>
<dbReference type="GO" id="GO:0032329">
    <property type="term" value="P:serine transport"/>
    <property type="evidence" value="ECO:0007669"/>
    <property type="project" value="InterPro"/>
</dbReference>
<dbReference type="GO" id="GO:0015826">
    <property type="term" value="P:threonine transport"/>
    <property type="evidence" value="ECO:0007669"/>
    <property type="project" value="InterPro"/>
</dbReference>
<dbReference type="FunFam" id="1.10.3860.10:FF:000003">
    <property type="entry name" value="Serine/threonine transporter sstT"/>
    <property type="match status" value="1"/>
</dbReference>
<dbReference type="Gene3D" id="1.10.3860.10">
    <property type="entry name" value="Sodium:dicarboxylate symporter"/>
    <property type="match status" value="1"/>
</dbReference>
<dbReference type="HAMAP" id="MF_01582">
    <property type="entry name" value="Ser_Thr_transp_SstT"/>
    <property type="match status" value="1"/>
</dbReference>
<dbReference type="InterPro" id="IPR001991">
    <property type="entry name" value="Na-dicarboxylate_symporter"/>
</dbReference>
<dbReference type="InterPro" id="IPR036458">
    <property type="entry name" value="Na:dicarbo_symporter_sf"/>
</dbReference>
<dbReference type="InterPro" id="IPR023025">
    <property type="entry name" value="Ser_Thr_transp_SstT"/>
</dbReference>
<dbReference type="NCBIfam" id="NF010151">
    <property type="entry name" value="PRK13628.1"/>
    <property type="match status" value="1"/>
</dbReference>
<dbReference type="PANTHER" id="PTHR42865">
    <property type="entry name" value="PROTON/GLUTAMATE-ASPARTATE SYMPORTER"/>
    <property type="match status" value="1"/>
</dbReference>
<dbReference type="PANTHER" id="PTHR42865:SF8">
    <property type="entry name" value="SERINE_THREONINE TRANSPORTER SSTT"/>
    <property type="match status" value="1"/>
</dbReference>
<dbReference type="Pfam" id="PF00375">
    <property type="entry name" value="SDF"/>
    <property type="match status" value="1"/>
</dbReference>
<dbReference type="PRINTS" id="PR00173">
    <property type="entry name" value="EDTRNSPORT"/>
</dbReference>
<dbReference type="SUPFAM" id="SSF118215">
    <property type="entry name" value="Proton glutamate symport protein"/>
    <property type="match status" value="1"/>
</dbReference>
<feature type="chain" id="PRO_0000309153" description="Serine/threonine transporter SstT">
    <location>
        <begin position="1"/>
        <end position="413"/>
    </location>
</feature>
<feature type="transmembrane region" description="Helical" evidence="1">
    <location>
        <begin position="15"/>
        <end position="35"/>
    </location>
</feature>
<feature type="transmembrane region" description="Helical" evidence="1">
    <location>
        <begin position="48"/>
        <end position="68"/>
    </location>
</feature>
<feature type="transmembrane region" description="Helical" evidence="1">
    <location>
        <begin position="82"/>
        <end position="102"/>
    </location>
</feature>
<feature type="transmembrane region" description="Helical" evidence="1">
    <location>
        <begin position="141"/>
        <end position="161"/>
    </location>
</feature>
<feature type="transmembrane region" description="Helical" evidence="1">
    <location>
        <begin position="178"/>
        <end position="198"/>
    </location>
</feature>
<feature type="transmembrane region" description="Helical" evidence="1">
    <location>
        <begin position="216"/>
        <end position="236"/>
    </location>
</feature>
<feature type="transmembrane region" description="Helical" evidence="1">
    <location>
        <begin position="290"/>
        <end position="310"/>
    </location>
</feature>
<feature type="transmembrane region" description="Helical" evidence="1">
    <location>
        <begin position="330"/>
        <end position="350"/>
    </location>
</feature>
<feature type="transmembrane region" description="Helical" evidence="1">
    <location>
        <begin position="357"/>
        <end position="377"/>
    </location>
</feature>
<accession>Q5DZC3</accession>
<evidence type="ECO:0000255" key="1">
    <source>
        <dbReference type="HAMAP-Rule" id="MF_01582"/>
    </source>
</evidence>
<keyword id="KW-0029">Amino-acid transport</keyword>
<keyword id="KW-0997">Cell inner membrane</keyword>
<keyword id="KW-1003">Cell membrane</keyword>
<keyword id="KW-0472">Membrane</keyword>
<keyword id="KW-1185">Reference proteome</keyword>
<keyword id="KW-0769">Symport</keyword>
<keyword id="KW-0812">Transmembrane</keyword>
<keyword id="KW-1133">Transmembrane helix</keyword>
<keyword id="KW-0813">Transport</keyword>
<proteinExistence type="inferred from homology"/>
<reference key="1">
    <citation type="journal article" date="2005" name="Proc. Natl. Acad. Sci. U.S.A.">
        <title>Complete genome sequence of Vibrio fischeri: a symbiotic bacterium with pathogenic congeners.</title>
        <authorList>
            <person name="Ruby E.G."/>
            <person name="Urbanowski M."/>
            <person name="Campbell J."/>
            <person name="Dunn A."/>
            <person name="Faini M."/>
            <person name="Gunsalus R."/>
            <person name="Lostroh P."/>
            <person name="Lupp C."/>
            <person name="McCann J."/>
            <person name="Millikan D."/>
            <person name="Schaefer A."/>
            <person name="Stabb E."/>
            <person name="Stevens A."/>
            <person name="Visick K."/>
            <person name="Whistler C."/>
            <person name="Greenberg E.P."/>
        </authorList>
    </citation>
    <scope>NUCLEOTIDE SEQUENCE [LARGE SCALE GENOMIC DNA]</scope>
    <source>
        <strain>ATCC 700601 / ES114</strain>
    </source>
</reference>
<organism>
    <name type="scientific">Aliivibrio fischeri (strain ATCC 700601 / ES114)</name>
    <name type="common">Vibrio fischeri</name>
    <dbReference type="NCBI Taxonomy" id="312309"/>
    <lineage>
        <taxon>Bacteria</taxon>
        <taxon>Pseudomonadati</taxon>
        <taxon>Pseudomonadota</taxon>
        <taxon>Gammaproteobacteria</taxon>
        <taxon>Vibrionales</taxon>
        <taxon>Vibrionaceae</taxon>
        <taxon>Aliivibrio</taxon>
    </lineage>
</organism>
<comment type="function">
    <text evidence="1">Involved in the import of serine and threonine into the cell, with the concomitant import of sodium (symport system).</text>
</comment>
<comment type="catalytic activity">
    <reaction evidence="1">
        <text>L-serine(in) + Na(+)(in) = L-serine(out) + Na(+)(out)</text>
        <dbReference type="Rhea" id="RHEA:29575"/>
        <dbReference type="ChEBI" id="CHEBI:29101"/>
        <dbReference type="ChEBI" id="CHEBI:33384"/>
    </reaction>
    <physiologicalReaction direction="right-to-left" evidence="1">
        <dbReference type="Rhea" id="RHEA:29577"/>
    </physiologicalReaction>
</comment>
<comment type="catalytic activity">
    <reaction evidence="1">
        <text>L-threonine(in) + Na(+)(in) = L-threonine(out) + Na(+)(out)</text>
        <dbReference type="Rhea" id="RHEA:69999"/>
        <dbReference type="ChEBI" id="CHEBI:29101"/>
        <dbReference type="ChEBI" id="CHEBI:57926"/>
    </reaction>
    <physiologicalReaction direction="right-to-left" evidence="1">
        <dbReference type="Rhea" id="RHEA:70001"/>
    </physiologicalReaction>
</comment>
<comment type="subcellular location">
    <subcellularLocation>
        <location evidence="1">Cell inner membrane</location>
        <topology evidence="1">Multi-pass membrane protein</topology>
    </subcellularLocation>
</comment>
<comment type="similarity">
    <text evidence="1">Belongs to the dicarboxylate/amino acid:cation symporter (DAACS) (TC 2.A.23) family.</text>
</comment>
<gene>
    <name evidence="1" type="primary">sstT</name>
    <name type="ordered locus">VF_A0803</name>
</gene>
<name>SSTT_ALIF1</name>
<sequence length="413" mass="42943">MSQAQPLLVRMMNTNIVIQILIGIIAGVALATLAPNLAISAGLFGELFVSALKAVAPILVFILVAASIANQKRGQNSNMKPVIVLYLVGTFCASLTAVVMSFLFPTTLTLVIDAATNTAPEGIVEVINTLLFKIIDNPINALMTGNFIGILGWAVALGLGLHSASDATKKIFVDLSNCISAIVTVVIRFAPIGIFGLVSHTFAETGFAVLAGYSHLLAVLLGSMAFIALIVNPLIVYIRTRRNPYPLVFLCLRESGVTAFFTRSSAANIPVNMALCERLNLHKDTYSVSIPLGATINMAGAAITITVLTLAAVNTAGVEVDLATALLLSLVAAVSACGASGVAGGSLLLIPLACSLFGISNDIAMQVVAIGFIIGVVQDSAETALNSSTDVLFTTAACRKADNPYKPLVQPTN</sequence>
<protein>
    <recommendedName>
        <fullName evidence="1">Serine/threonine transporter SstT</fullName>
    </recommendedName>
    <alternativeName>
        <fullName evidence="1">Na(+)/serine-threonine symporter</fullName>
    </alternativeName>
</protein>